<proteinExistence type="evidence at protein level"/>
<evidence type="ECO:0000250" key="1"/>
<evidence type="ECO:0000250" key="2">
    <source>
        <dbReference type="UniProtKB" id="Q05128"/>
    </source>
</evidence>
<evidence type="ECO:0000269" key="3">
    <source>
    </source>
</evidence>
<evidence type="ECO:0000269" key="4">
    <source>
    </source>
</evidence>
<evidence type="ECO:0000269" key="5">
    <source>
    </source>
</evidence>
<evidence type="ECO:0000269" key="6">
    <source>
    </source>
</evidence>
<evidence type="ECO:0000269" key="7">
    <source>
    </source>
</evidence>
<evidence type="ECO:0000303" key="8">
    <source>
    </source>
</evidence>
<evidence type="ECO:0000305" key="9"/>
<evidence type="ECO:0000305" key="10">
    <source>
    </source>
</evidence>
<evidence type="ECO:0007744" key="11">
    <source>
        <dbReference type="PDB" id="5B0V"/>
    </source>
</evidence>
<evidence type="ECO:0007829" key="12">
    <source>
        <dbReference type="PDB" id="5B0V"/>
    </source>
</evidence>
<comment type="function">
    <text evidence="1 7">Plays an essential role virus particle assembly and budding (PubMed:33673144). Promotes virus assembly and budding by interacting with host proteins of the multivesicular body pathway. The interaction with host E3 ubiquitin ligase SMURF2 facilitates virus budding (PubMed:33673144). The interaction with the nucleocapsid and the plasma membrane may also facilitate virus budding. Specific interactions with membrane-associated GP and VP24 during the budding process may also occur (By similarity). May play a role in genome replication (By similarity).</text>
</comment>
<comment type="subunit">
    <text evidence="5 6 7">Exists as a dimer until it reorganizes at the plasma membrane into multimeric form (PubMed:28580138). Interacts with host TSG101 (PubMed:17301151). Interacts (via PPXY motif) with SMURF2 (via WW domains); the interaction positively regulates virus budding (PubMed:33673144).</text>
</comment>
<comment type="interaction">
    <interactant intactId="EBI-40244030">
        <id>P35260</id>
    </interactant>
    <interactant intactId="EBI-1564678">
        <id>Q96J02</id>
        <label>ITCH</label>
    </interactant>
    <organismsDiffer>true</organismsDiffer>
    <experiments>2</experiments>
</comment>
<comment type="subcellular location">
    <subcellularLocation>
        <location evidence="4">Virion membrane</location>
        <topology>Peripheral membrane protein</topology>
    </subcellularLocation>
    <subcellularLocation>
        <location evidence="3">Host late endosome membrane</location>
        <topology evidence="10">Peripheral membrane protein</topology>
    </subcellularLocation>
    <subcellularLocation>
        <location evidence="3 6">Host cell membrane</location>
        <topology>Peripheral membrane protein</topology>
        <orientation evidence="10">Cytoplasmic side</orientation>
    </subcellularLocation>
    <subcellularLocation>
        <location evidence="3">Host endomembrane system</location>
        <topology>Peripheral membrane protein</topology>
    </subcellularLocation>
    <text evidence="4">In virion, localizes on the intravirional side of the membrane. In the host cell, it is found associated with virus-induced membrane proliferation foci and probably also in multivesicular bodies. These VP40-enriched membrane clusters are then redistributed to the plasma membrane where budding takes place.</text>
</comment>
<comment type="domain">
    <text evidence="2 7">Late-budding domains (L domains) are short sequence motifs essential for viral particle budding. They recruit proteins of the host ESCRT machinery (Endosomal Sorting Complex Required for Transport) or ESCRT-associated proteins. VP40 contains one L domain: a PPXY motif which potentially interacts with the WW domain 3 of NEDD4 E3 ubiquitin ligase and the three WW domains of SMURF2 E3 ubiquitin ligase.</text>
</comment>
<comment type="miscellaneous">
    <text>Most abundant protein in the virion.</text>
</comment>
<comment type="similarity">
    <text evidence="9">Belongs to the filoviridae matrix protein VP40 family.</text>
</comment>
<feature type="chain" id="PRO_0000222165" description="Matrix protein VP40">
    <location>
        <begin position="1"/>
        <end position="303"/>
    </location>
</feature>
<feature type="short sequence motif" description="PPXY motif">
    <location>
        <begin position="16"/>
        <end position="19"/>
    </location>
</feature>
<feature type="sequence variant" description="In strain: Isolate Feldmann.">
    <original>P</original>
    <variation>S</variation>
    <location>
        <position position="16"/>
    </location>
</feature>
<feature type="sequence variant" description="In strain: pp3/guinea pig lethal.">
    <original>D</original>
    <variation>N</variation>
    <location>
        <position position="184"/>
    </location>
</feature>
<feature type="mutagenesis site" description="Abolishes interaction with host SMURF2." evidence="7">
    <original>PPPYADHG</original>
    <variation>AAAPAADH</variation>
    <location>
        <begin position="16"/>
        <end position="23"/>
    </location>
</feature>
<feature type="mutagenesis site" description="30% loss of virus-like particles." evidence="5">
    <original>P</original>
    <variation>A</variation>
    <location>
        <position position="16"/>
    </location>
</feature>
<feature type="mutagenesis site" description="50% loss of virus-like particles." evidence="5">
    <original>P</original>
    <variation>A</variation>
    <location>
        <position position="17"/>
    </location>
</feature>
<feature type="mutagenesis site" description="70% loss of virus-like particles." evidence="5">
    <original>Y</original>
    <variation>A</variation>
    <location>
        <position position="19"/>
    </location>
</feature>
<feature type="strand" evidence="12">
    <location>
        <begin position="42"/>
        <end position="45"/>
    </location>
</feature>
<feature type="helix" evidence="12">
    <location>
        <begin position="49"/>
        <end position="51"/>
    </location>
</feature>
<feature type="strand" evidence="12">
    <location>
        <begin position="58"/>
        <end position="72"/>
    </location>
</feature>
<feature type="strand" evidence="12">
    <location>
        <begin position="77"/>
        <end position="90"/>
    </location>
</feature>
<feature type="helix" evidence="12">
    <location>
        <begin position="91"/>
        <end position="93"/>
    </location>
</feature>
<feature type="helix" evidence="12">
    <location>
        <begin position="96"/>
        <end position="105"/>
    </location>
</feature>
<feature type="strand" evidence="12">
    <location>
        <begin position="108"/>
        <end position="117"/>
    </location>
</feature>
<feature type="strand" evidence="12">
    <location>
        <begin position="119"/>
        <end position="125"/>
    </location>
</feature>
<feature type="helix" evidence="12">
    <location>
        <begin position="136"/>
        <end position="140"/>
    </location>
</feature>
<feature type="strand" evidence="12">
    <location>
        <begin position="141"/>
        <end position="146"/>
    </location>
</feature>
<feature type="helix" evidence="12">
    <location>
        <begin position="147"/>
        <end position="149"/>
    </location>
</feature>
<feature type="strand" evidence="12">
    <location>
        <begin position="161"/>
        <end position="173"/>
    </location>
</feature>
<feature type="helix" evidence="12">
    <location>
        <begin position="183"/>
        <end position="187"/>
    </location>
</feature>
<feature type="strand" evidence="12">
    <location>
        <begin position="191"/>
        <end position="198"/>
    </location>
</feature>
<feature type="helix" evidence="12">
    <location>
        <begin position="211"/>
        <end position="214"/>
    </location>
</feature>
<feature type="turn" evidence="12">
    <location>
        <begin position="220"/>
        <end position="222"/>
    </location>
</feature>
<feature type="helix" evidence="12">
    <location>
        <begin position="223"/>
        <end position="229"/>
    </location>
</feature>
<feature type="helix" evidence="12">
    <location>
        <begin position="230"/>
        <end position="234"/>
    </location>
</feature>
<feature type="strand" evidence="12">
    <location>
        <begin position="237"/>
        <end position="239"/>
    </location>
</feature>
<feature type="strand" evidence="12">
    <location>
        <begin position="243"/>
        <end position="250"/>
    </location>
</feature>
<feature type="turn" evidence="12">
    <location>
        <begin position="253"/>
        <end position="255"/>
    </location>
</feature>
<feature type="strand" evidence="12">
    <location>
        <begin position="259"/>
        <end position="261"/>
    </location>
</feature>
<feature type="strand" evidence="12">
    <location>
        <begin position="272"/>
        <end position="276"/>
    </location>
</feature>
<feature type="helix" evidence="12">
    <location>
        <begin position="283"/>
        <end position="285"/>
    </location>
</feature>
<feature type="strand" evidence="12">
    <location>
        <begin position="290"/>
        <end position="296"/>
    </location>
</feature>
<feature type="helix" evidence="12">
    <location>
        <begin position="298"/>
        <end position="300"/>
    </location>
</feature>
<sequence length="303" mass="33794">MASSSNYNTYMQYLNPPPYADHGANQLIPADQLSNQQGITPNYVGDLNLDDQFKGNVCHAFTLEAIIDISAYNERTVKGVPAWLPLGIMSNFEYPLAHTVAALLTGSYTITQFTHNGQKFVRVNRLGTGIPAHPLRMLREGNQAFIQNMVIPRNFSTNQFTYNLTNLVLSVQKLPDDAWRPSKDKLIGNTMHPAVSIHPNLPPIVLPTVKKQAYRQHKNPNNGPLLAISGILHQLRVEKVPEKTSLFRISLPADMFSVKEGMMKKRGENSPVVYFQAPENFPLNGFNNRQVVLAYANPTLSAV</sequence>
<gene>
    <name type="primary">VP40</name>
</gene>
<reference key="1">
    <citation type="journal article" date="1992" name="Virus Res.">
        <title>Marburg virus, a filovirus: messenger RNAs, gene order, and regulatory elements of the replication cycle.</title>
        <authorList>
            <person name="Feldmann H."/>
            <person name="Muehlberger E."/>
            <person name="Randolf A."/>
            <person name="Will C."/>
            <person name="Kiley M.P."/>
            <person name="Sanchez A."/>
            <person name="Klenk H.-D."/>
        </authorList>
    </citation>
    <scope>NUCLEOTIDE SEQUENCE [MRNA]</scope>
    <source>
        <strain>Isolate Feldmann</strain>
    </source>
</reference>
<reference key="2">
    <citation type="submission" date="2003-10" db="EMBL/GenBank/DDBJ databases">
        <authorList>
            <person name="Chain P.S.G."/>
            <person name="Malfatti S.A."/>
            <person name="Hajjaj A."/>
            <person name="Vergez L.M."/>
            <person name="Do L.H."/>
            <person name="Smith K.L."/>
            <person name="McCready P.M."/>
        </authorList>
    </citation>
    <scope>NUCLEOTIDE SEQUENCE [GENOMIC RNA]</scope>
    <source>
        <strain>pp3/guinea pig lethal</strain>
        <strain>pp4/guinea pig nonlethal</strain>
    </source>
</reference>
<reference key="3">
    <citation type="submission" date="2003-10" db="EMBL/GenBank/DDBJ databases">
        <authorList>
            <person name="Ichou M.A."/>
            <person name="Paragas J."/>
            <person name="Jahrling P.B."/>
            <person name="Ibrahim M.S."/>
            <person name="Lofts L."/>
            <person name="Hevey M."/>
            <person name="Schmaljohn A."/>
        </authorList>
    </citation>
    <scope>NUCLEOTIDE SEQUENCE [GENOMIC RNA]</scope>
    <source>
        <strain>pp3/guinea pig lethal</strain>
        <strain>pp4/guinea pig nonlethal</strain>
    </source>
</reference>
<reference key="4">
    <citation type="journal article" date="2006" name="J. Virol.">
        <title>Rescue of recombinant Marburg virus from cDNA is dependent on nucleocapsid protein VP30.</title>
        <authorList>
            <person name="Enterlein S."/>
            <person name="Volchkov V."/>
            <person name="Weik M."/>
            <person name="Kolesnikova L."/>
            <person name="Volchkova V."/>
            <person name="Klenk H.-D."/>
            <person name="Muehlberger E."/>
        </authorList>
    </citation>
    <scope>NUCLEOTIDE SEQUENCE [GENOMIC RNA]</scope>
</reference>
<reference key="5">
    <citation type="journal article" date="2002" name="J. Virol.">
        <title>VP40, the matrix protein of Marburg virus, is associated with membranes of the late endosomal compartment.</title>
        <authorList>
            <person name="Kolesnikova L."/>
            <person name="Bugany H."/>
            <person name="Klenk H.-D."/>
            <person name="Becker S."/>
        </authorList>
    </citation>
    <scope>SUBCELLULAR LOCATION</scope>
</reference>
<reference key="6">
    <citation type="journal article" date="2004" name="J. Virol.">
        <title>The matrix protein of Marburg virus is transported to the plasma membrane along cellular membranes: exploiting the retrograde late endosomal pathway.</title>
        <authorList>
            <person name="Kolesnikova L."/>
            <person name="Bamberg S."/>
            <person name="Berghofer B."/>
            <person name="Becker S."/>
        </authorList>
    </citation>
    <scope>SUBCELLULAR LOCATION</scope>
</reference>
<reference key="7">
    <citation type="journal article" date="2007" name="J. Virol.">
        <title>Interaction of Tsg101 with Marburg virus VP40 depends on the PPPY motif, but not the PT/SAP motif as in the case of Ebola virus, and Tsg101 plays a critical role in the budding of Marburg virus-like particles induced by VP40, NP, and GP.</title>
        <authorList>
            <person name="Urata S."/>
            <person name="Noda T."/>
            <person name="Kawaoka Y."/>
            <person name="Morikawa S."/>
            <person name="Yokosawa H."/>
            <person name="Yasuda J."/>
        </authorList>
    </citation>
    <scope>LATE-BUDDING DOMAIN</scope>
    <scope>INTERACTION WITH HOST TSG101</scope>
    <scope>MUTAGENESIS OF PRO-16; PRO-17 AND TYR-19</scope>
</reference>
<reference key="8">
    <citation type="journal article" date="2010" name="J. Virol.">
        <title>Tsg101 is recruited by a late domain of the nucleocapsid protein to support budding of Marburg virus-like particles.</title>
        <authorList>
            <person name="Dolnik O."/>
            <person name="Kolesnikova L."/>
            <person name="Stevermann L."/>
            <person name="Becker S."/>
        </authorList>
    </citation>
    <scope>LATE-BUDDING DOMAIN</scope>
</reference>
<reference key="9">
    <citation type="journal article" date="2017" name="RSC Adv.">
        <title>Plasma membrane association facilitates conformational changes in the Marburg virus protein VP40 dimer.</title>
        <authorList>
            <person name="Bhattarai N."/>
            <person name="Gc J.B."/>
            <person name="Gerstman B.S."/>
            <person name="Stahelin R.V."/>
            <person name="Chapagain P.P."/>
        </authorList>
    </citation>
    <scope>SUBCELLULAR LOCATION</scope>
    <scope>DIMERIZATION</scope>
    <scope>NOMENCLATURE</scope>
</reference>
<reference key="10">
    <citation type="journal article" date="2021" name="Viruses">
        <title>Ubiquitin Ligase SMURF2 Interacts with Filovirus VP40 and Promotes Egress of VP40 VLPs.</title>
        <authorList>
            <person name="Shepley-McTaggart A."/>
            <person name="Schwoerer M.P."/>
            <person name="Sagum C.A."/>
            <person name="Bedford M.T."/>
            <person name="Jaladanki C.K."/>
            <person name="Fan H."/>
            <person name="Cassel J."/>
            <person name="Harty R.N."/>
        </authorList>
    </citation>
    <scope>FUNCTION</scope>
    <scope>INTERACTION WITH HOST SMURF2</scope>
    <scope>DOMAIN</scope>
    <scope>MUTAGENESIS OF 16-PRO--GLY-23</scope>
</reference>
<reference evidence="11" key="11">
    <citation type="journal article" date="2016" name="J. Virol.">
        <title>Crystal Structure of Marburg Virus VP40 Reveals a Broad, Basic Patch for Matrix Assembly and a Requirement of the N-Terminal Domain for Immunosuppression.</title>
        <authorList>
            <person name="Oda S."/>
            <person name="Noda T."/>
            <person name="Wijesinghe K.J."/>
            <person name="Halfmann P."/>
            <person name="Bornholdt Z.A."/>
            <person name="Abelson D.M."/>
            <person name="Armbrust T."/>
            <person name="Stahelin R.V."/>
            <person name="Kawaoka Y."/>
            <person name="Saphire E.O."/>
        </authorList>
    </citation>
    <scope>X-RAY CRYSTALLOGRAPHY (2.81 ANGSTROMS) OF 2-303</scope>
</reference>
<organism>
    <name type="scientific">Lake Victoria marburgvirus (strain Musoke-80)</name>
    <name type="common">MARV</name>
    <name type="synonym">Marburg virus (strain Kenya/Musoke/1980)</name>
    <dbReference type="NCBI Taxonomy" id="33727"/>
    <lineage>
        <taxon>Viruses</taxon>
        <taxon>Riboviria</taxon>
        <taxon>Orthornavirae</taxon>
        <taxon>Negarnaviricota</taxon>
        <taxon>Haploviricotina</taxon>
        <taxon>Monjiviricetes</taxon>
        <taxon>Mononegavirales</taxon>
        <taxon>Filoviridae</taxon>
        <taxon>Orthomarburgvirus</taxon>
        <taxon>Orthomarburgvirus marburgense</taxon>
    </lineage>
</organism>
<dbReference type="EMBL" id="Z12132">
    <property type="protein sequence ID" value="CAA78116.1"/>
    <property type="molecule type" value="mRNA"/>
</dbReference>
<dbReference type="EMBL" id="AY430365">
    <property type="protein sequence ID" value="AAR85462.1"/>
    <property type="molecule type" value="Genomic_RNA"/>
</dbReference>
<dbReference type="EMBL" id="AY430366">
    <property type="protein sequence ID" value="AAR85455.1"/>
    <property type="molecule type" value="Genomic_RNA"/>
</dbReference>
<dbReference type="EMBL" id="DQ217792">
    <property type="protein sequence ID" value="ABA87126.1"/>
    <property type="molecule type" value="Genomic_RNA"/>
</dbReference>
<dbReference type="RefSeq" id="YP_001531155.1">
    <property type="nucleotide sequence ID" value="NC_001608.3"/>
</dbReference>
<dbReference type="PDB" id="5B0V">
    <property type="method" value="X-ray"/>
    <property type="resolution" value="2.81 A"/>
    <property type="chains" value="A/B=2-303"/>
</dbReference>
<dbReference type="PDBsum" id="5B0V"/>
<dbReference type="EMDB" id="EMD-11663"/>
<dbReference type="EMDB" id="EMD-11664"/>
<dbReference type="SMR" id="P35260"/>
<dbReference type="ELM" id="P35260"/>
<dbReference type="IntAct" id="P35260">
    <property type="interactions" value="8"/>
</dbReference>
<dbReference type="DNASU" id="920947"/>
<dbReference type="GeneID" id="920947"/>
<dbReference type="KEGG" id="vg:920947"/>
<dbReference type="EvolutionaryTrace" id="P35260"/>
<dbReference type="Proteomes" id="UP000007771">
    <property type="component" value="Genome"/>
</dbReference>
<dbReference type="Proteomes" id="UP000137266">
    <property type="component" value="Genome"/>
</dbReference>
<dbReference type="Proteomes" id="UP000160614">
    <property type="component" value="Genome"/>
</dbReference>
<dbReference type="Proteomes" id="UP000180448">
    <property type="component" value="Segment"/>
</dbReference>
<dbReference type="GO" id="GO:0033645">
    <property type="term" value="C:host cell endomembrane system"/>
    <property type="evidence" value="ECO:0007669"/>
    <property type="project" value="UniProtKB-SubCell"/>
</dbReference>
<dbReference type="GO" id="GO:0044185">
    <property type="term" value="C:host cell late endosome membrane"/>
    <property type="evidence" value="ECO:0007669"/>
    <property type="project" value="UniProtKB-SubCell"/>
</dbReference>
<dbReference type="GO" id="GO:0020002">
    <property type="term" value="C:host cell plasma membrane"/>
    <property type="evidence" value="ECO:0007669"/>
    <property type="project" value="UniProtKB-SubCell"/>
</dbReference>
<dbReference type="GO" id="GO:0016020">
    <property type="term" value="C:membrane"/>
    <property type="evidence" value="ECO:0007669"/>
    <property type="project" value="UniProtKB-KW"/>
</dbReference>
<dbReference type="GO" id="GO:0055036">
    <property type="term" value="C:virion membrane"/>
    <property type="evidence" value="ECO:0007669"/>
    <property type="project" value="UniProtKB-SubCell"/>
</dbReference>
<dbReference type="GO" id="GO:0039660">
    <property type="term" value="F:structural constituent of virion"/>
    <property type="evidence" value="ECO:0007669"/>
    <property type="project" value="UniProtKB-KW"/>
</dbReference>
<dbReference type="GO" id="GO:0052170">
    <property type="term" value="P:symbiont-mediated suppression of host innate immune response"/>
    <property type="evidence" value="ECO:0007669"/>
    <property type="project" value="UniProtKB-KW"/>
</dbReference>
<dbReference type="GO" id="GO:0039576">
    <property type="term" value="P:symbiont-mediated suppression of host JAK-STAT cascade via inhibition of JAK1 activity"/>
    <property type="evidence" value="ECO:0007669"/>
    <property type="project" value="UniProtKB-KW"/>
</dbReference>
<dbReference type="GO" id="GO:0039502">
    <property type="term" value="P:symbiont-mediated suppression of host type I interferon-mediated signaling pathway"/>
    <property type="evidence" value="ECO:0007669"/>
    <property type="project" value="UniProtKB-KW"/>
</dbReference>
<dbReference type="GO" id="GO:0046761">
    <property type="term" value="P:viral budding from plasma membrane"/>
    <property type="evidence" value="ECO:0000314"/>
    <property type="project" value="UniProtKB"/>
</dbReference>
<dbReference type="GO" id="GO:0039702">
    <property type="term" value="P:viral budding via host ESCRT complex"/>
    <property type="evidence" value="ECO:0007669"/>
    <property type="project" value="UniProtKB-KW"/>
</dbReference>
<dbReference type="Gene3D" id="2.70.20.20">
    <property type="entry name" value="Matrix protein VP40, N-terminal domain"/>
    <property type="match status" value="1"/>
</dbReference>
<dbReference type="InterPro" id="IPR008986">
    <property type="entry name" value="EV_matrix"/>
</dbReference>
<dbReference type="InterPro" id="IPR043079">
    <property type="entry name" value="EV_matrix_protein_N"/>
</dbReference>
<dbReference type="InterPro" id="IPR038057">
    <property type="entry name" value="EV_matrix_sf"/>
</dbReference>
<dbReference type="Pfam" id="PF07447">
    <property type="entry name" value="Matrix_Filo"/>
    <property type="match status" value="1"/>
</dbReference>
<dbReference type="PIRSF" id="PIRSF018327">
    <property type="entry name" value="VP40_FiloV"/>
    <property type="match status" value="1"/>
</dbReference>
<dbReference type="SUPFAM" id="SSF50012">
    <property type="entry name" value="EV matrix protein"/>
    <property type="match status" value="1"/>
</dbReference>
<keyword id="KW-0002">3D-structure</keyword>
<keyword id="KW-1032">Host cell membrane</keyword>
<keyword id="KW-1039">Host endosome</keyword>
<keyword id="KW-1043">Host membrane</keyword>
<keyword id="KW-0945">Host-virus interaction</keyword>
<keyword id="KW-1090">Inhibition of host innate immune response by virus</keyword>
<keyword id="KW-1114">Inhibition of host interferon signaling pathway by virus</keyword>
<keyword id="KW-1096">Inhibition of host JAK1 by virus</keyword>
<keyword id="KW-0922">Interferon antiviral system evasion</keyword>
<keyword id="KW-0472">Membrane</keyword>
<keyword id="KW-1185">Reference proteome</keyword>
<keyword id="KW-1198">Viral budding</keyword>
<keyword id="KW-1187">Viral budding via the host ESCRT complexes</keyword>
<keyword id="KW-0899">Viral immunoevasion</keyword>
<keyword id="KW-0468">Viral matrix protein</keyword>
<keyword id="KW-1188">Viral release from host cell</keyword>
<keyword id="KW-0946">Virion</keyword>
<protein>
    <recommendedName>
        <fullName>Matrix protein VP40</fullName>
    </recommendedName>
    <alternativeName>
        <fullName evidence="8">Marburg VP40</fullName>
        <shortName evidence="8">mVP40</shortName>
    </alternativeName>
    <alternativeName>
        <fullName>Membrane-associated protein VP40</fullName>
    </alternativeName>
</protein>
<accession>P35260</accession>
<accession>Q38L43</accession>
<accession>Q6T6U1</accession>
<accession>Q6T6U8</accession>
<name>VP40_MABVM</name>
<organismHost>
    <name type="scientific">Chlorocebus aethiops</name>
    <name type="common">Green monkey</name>
    <name type="synonym">Cercopithecus aethiops</name>
    <dbReference type="NCBI Taxonomy" id="9534"/>
</organismHost>
<organismHost>
    <name type="scientific">Homo sapiens</name>
    <name type="common">Human</name>
    <dbReference type="NCBI Taxonomy" id="9606"/>
</organismHost>
<organismHost>
    <name type="scientific">Rousettus aegyptiacus</name>
    <name type="common">Egyptian fruit bat</name>
    <name type="synonym">Pteropus aegyptiacus</name>
    <dbReference type="NCBI Taxonomy" id="9407"/>
</organismHost>